<protein>
    <recommendedName>
        <fullName evidence="1">Na(+)-translocating NADH-quinone reductase subunit E</fullName>
        <shortName evidence="1">Na(+)-NQR subunit E</shortName>
        <shortName evidence="1">Na(+)-translocating NQR subunit E</shortName>
        <ecNumber evidence="1">7.2.1.1</ecNumber>
    </recommendedName>
    <alternativeName>
        <fullName evidence="1">NQR complex subunit E</fullName>
    </alternativeName>
    <alternativeName>
        <fullName evidence="1">NQR-1 subunit E</fullName>
    </alternativeName>
</protein>
<organism>
    <name type="scientific">Proteus mirabilis (strain HI4320)</name>
    <dbReference type="NCBI Taxonomy" id="529507"/>
    <lineage>
        <taxon>Bacteria</taxon>
        <taxon>Pseudomonadati</taxon>
        <taxon>Pseudomonadota</taxon>
        <taxon>Gammaproteobacteria</taxon>
        <taxon>Enterobacterales</taxon>
        <taxon>Morganellaceae</taxon>
        <taxon>Proteus</taxon>
    </lineage>
</organism>
<reference key="1">
    <citation type="journal article" date="2008" name="J. Bacteriol.">
        <title>Complete genome sequence of uropathogenic Proteus mirabilis, a master of both adherence and motility.</title>
        <authorList>
            <person name="Pearson M.M."/>
            <person name="Sebaihia M."/>
            <person name="Churcher C."/>
            <person name="Quail M.A."/>
            <person name="Seshasayee A.S."/>
            <person name="Luscombe N.M."/>
            <person name="Abdellah Z."/>
            <person name="Arrosmith C."/>
            <person name="Atkin B."/>
            <person name="Chillingworth T."/>
            <person name="Hauser H."/>
            <person name="Jagels K."/>
            <person name="Moule S."/>
            <person name="Mungall K."/>
            <person name="Norbertczak H."/>
            <person name="Rabbinowitsch E."/>
            <person name="Walker D."/>
            <person name="Whithead S."/>
            <person name="Thomson N.R."/>
            <person name="Rather P.N."/>
            <person name="Parkhill J."/>
            <person name="Mobley H.L.T."/>
        </authorList>
    </citation>
    <scope>NUCLEOTIDE SEQUENCE [LARGE SCALE GENOMIC DNA]</scope>
    <source>
        <strain>HI4320</strain>
    </source>
</reference>
<evidence type="ECO:0000255" key="1">
    <source>
        <dbReference type="HAMAP-Rule" id="MF_00429"/>
    </source>
</evidence>
<proteinExistence type="inferred from homology"/>
<name>NQRE_PROMH</name>
<sequence length="198" mass="21584">MEHYISLFVRAVFIENMALAFFLGMCTFLAVSKNVKTAFGLGIAVTVVLGLSVPLNNLVYNYVLRANALMEGVDLSFLNFITFIGVIAALVQILEMILDRYFPSLYNALGIFLPLITVNCAIFGGVSFMAQRDYNFSESIVYGFGSGIGWMLAIVLLASIREKMKYADVPSGMKGLGVTFVTTGLMALGFMSFSGVQL</sequence>
<accession>B4EUT8</accession>
<comment type="function">
    <text evidence="1">NQR complex catalyzes the reduction of ubiquinone-1 to ubiquinol by two successive reactions, coupled with the transport of Na(+) ions from the cytoplasm to the periplasm. NqrA to NqrE are probably involved in the second step, the conversion of ubisemiquinone to ubiquinol.</text>
</comment>
<comment type="catalytic activity">
    <reaction evidence="1">
        <text>a ubiquinone + n Na(+)(in) + NADH + H(+) = a ubiquinol + n Na(+)(out) + NAD(+)</text>
        <dbReference type="Rhea" id="RHEA:47748"/>
        <dbReference type="Rhea" id="RHEA-COMP:9565"/>
        <dbReference type="Rhea" id="RHEA-COMP:9566"/>
        <dbReference type="ChEBI" id="CHEBI:15378"/>
        <dbReference type="ChEBI" id="CHEBI:16389"/>
        <dbReference type="ChEBI" id="CHEBI:17976"/>
        <dbReference type="ChEBI" id="CHEBI:29101"/>
        <dbReference type="ChEBI" id="CHEBI:57540"/>
        <dbReference type="ChEBI" id="CHEBI:57945"/>
        <dbReference type="EC" id="7.2.1.1"/>
    </reaction>
</comment>
<comment type="subunit">
    <text evidence="1">Composed of six subunits; NqrA, NqrB, NqrC, NqrD, NqrE and NqrF.</text>
</comment>
<comment type="subcellular location">
    <subcellularLocation>
        <location evidence="1">Cell inner membrane</location>
        <topology evidence="1">Multi-pass membrane protein</topology>
    </subcellularLocation>
</comment>
<comment type="similarity">
    <text evidence="1">Belongs to the NqrDE/RnfAE family.</text>
</comment>
<feature type="chain" id="PRO_1000191703" description="Na(+)-translocating NADH-quinone reductase subunit E">
    <location>
        <begin position="1"/>
        <end position="198"/>
    </location>
</feature>
<feature type="transmembrane region" description="Helical" evidence="1">
    <location>
        <begin position="11"/>
        <end position="31"/>
    </location>
</feature>
<feature type="transmembrane region" description="Helical" evidence="1">
    <location>
        <begin position="39"/>
        <end position="59"/>
    </location>
</feature>
<feature type="transmembrane region" description="Helical" evidence="1">
    <location>
        <begin position="77"/>
        <end position="97"/>
    </location>
</feature>
<feature type="transmembrane region" description="Helical" evidence="1">
    <location>
        <begin position="109"/>
        <end position="129"/>
    </location>
</feature>
<feature type="transmembrane region" description="Helical" evidence="1">
    <location>
        <begin position="140"/>
        <end position="160"/>
    </location>
</feature>
<feature type="transmembrane region" description="Helical" evidence="1">
    <location>
        <begin position="176"/>
        <end position="196"/>
    </location>
</feature>
<dbReference type="EC" id="7.2.1.1" evidence="1"/>
<dbReference type="EMBL" id="AM942759">
    <property type="protein sequence ID" value="CAR40920.1"/>
    <property type="molecule type" value="Genomic_DNA"/>
</dbReference>
<dbReference type="RefSeq" id="WP_004244800.1">
    <property type="nucleotide sequence ID" value="NC_010554.1"/>
</dbReference>
<dbReference type="SMR" id="B4EUT8"/>
<dbReference type="EnsemblBacteria" id="CAR40920">
    <property type="protein sequence ID" value="CAR40920"/>
    <property type="gene ID" value="PMI0356"/>
</dbReference>
<dbReference type="GeneID" id="6802019"/>
<dbReference type="KEGG" id="pmr:PMI0356"/>
<dbReference type="eggNOG" id="COG2209">
    <property type="taxonomic scope" value="Bacteria"/>
</dbReference>
<dbReference type="HOGENOM" id="CLU_095255_0_0_6"/>
<dbReference type="Proteomes" id="UP000008319">
    <property type="component" value="Chromosome"/>
</dbReference>
<dbReference type="GO" id="GO:0009276">
    <property type="term" value="C:Gram-negative-bacterium-type cell wall"/>
    <property type="evidence" value="ECO:0007669"/>
    <property type="project" value="InterPro"/>
</dbReference>
<dbReference type="GO" id="GO:0005886">
    <property type="term" value="C:plasma membrane"/>
    <property type="evidence" value="ECO:0007669"/>
    <property type="project" value="UniProtKB-SubCell"/>
</dbReference>
<dbReference type="GO" id="GO:0016655">
    <property type="term" value="F:oxidoreductase activity, acting on NAD(P)H, quinone or similar compound as acceptor"/>
    <property type="evidence" value="ECO:0007669"/>
    <property type="project" value="UniProtKB-UniRule"/>
</dbReference>
<dbReference type="GO" id="GO:0022904">
    <property type="term" value="P:respiratory electron transport chain"/>
    <property type="evidence" value="ECO:0007669"/>
    <property type="project" value="InterPro"/>
</dbReference>
<dbReference type="GO" id="GO:0006814">
    <property type="term" value="P:sodium ion transport"/>
    <property type="evidence" value="ECO:0007669"/>
    <property type="project" value="UniProtKB-UniRule"/>
</dbReference>
<dbReference type="HAMAP" id="MF_00429">
    <property type="entry name" value="NqrE"/>
    <property type="match status" value="1"/>
</dbReference>
<dbReference type="InterPro" id="IPR003667">
    <property type="entry name" value="NqrDE/RnfAE"/>
</dbReference>
<dbReference type="InterPro" id="IPR050133">
    <property type="entry name" value="NqrDE/RnfAE_oxidrdctase"/>
</dbReference>
<dbReference type="InterPro" id="IPR010967">
    <property type="entry name" value="NqrE"/>
</dbReference>
<dbReference type="NCBIfam" id="TIGR01940">
    <property type="entry name" value="nqrE"/>
    <property type="match status" value="1"/>
</dbReference>
<dbReference type="PANTHER" id="PTHR30335">
    <property type="entry name" value="INTEGRAL MEMBRANE PROTEIN OF SOXR-REDUCING COMPLEX"/>
    <property type="match status" value="1"/>
</dbReference>
<dbReference type="PANTHER" id="PTHR30335:SF1">
    <property type="entry name" value="NA(+)-TRANSLOCATING NADH-QUINONE REDUCTASE SUBUNIT E"/>
    <property type="match status" value="1"/>
</dbReference>
<dbReference type="Pfam" id="PF02508">
    <property type="entry name" value="Rnf-Nqr"/>
    <property type="match status" value="1"/>
</dbReference>
<dbReference type="PIRSF" id="PIRSF006102">
    <property type="entry name" value="NQR_DE"/>
    <property type="match status" value="1"/>
</dbReference>
<keyword id="KW-0997">Cell inner membrane</keyword>
<keyword id="KW-1003">Cell membrane</keyword>
<keyword id="KW-0406">Ion transport</keyword>
<keyword id="KW-0472">Membrane</keyword>
<keyword id="KW-0520">NAD</keyword>
<keyword id="KW-1185">Reference proteome</keyword>
<keyword id="KW-0915">Sodium</keyword>
<keyword id="KW-0739">Sodium transport</keyword>
<keyword id="KW-1278">Translocase</keyword>
<keyword id="KW-0812">Transmembrane</keyword>
<keyword id="KW-1133">Transmembrane helix</keyword>
<keyword id="KW-0813">Transport</keyword>
<keyword id="KW-0830">Ubiquinone</keyword>
<gene>
    <name evidence="1" type="primary">nqrE</name>
    <name type="ordered locus">PMI0356</name>
</gene>